<dbReference type="EMBL" id="AY914164">
    <property type="protein sequence ID" value="AAX11344.1"/>
    <property type="molecule type" value="mRNA"/>
</dbReference>
<dbReference type="SMR" id="Q5D232"/>
<dbReference type="TCDB" id="8.B.10.1.4">
    <property type="family name" value="the psalmotoxin-1 (pctx1) family"/>
</dbReference>
<dbReference type="ArachnoServer" id="AS000691">
    <property type="toxin name" value="U1-hexatoxin-Iw1e"/>
</dbReference>
<dbReference type="GO" id="GO:0005576">
    <property type="term" value="C:extracellular region"/>
    <property type="evidence" value="ECO:0007669"/>
    <property type="project" value="UniProtKB-SubCell"/>
</dbReference>
<dbReference type="Gene3D" id="2.10.80.10">
    <property type="entry name" value="Lipase, subunit A"/>
    <property type="match status" value="1"/>
</dbReference>
<dbReference type="InterPro" id="IPR020202">
    <property type="entry name" value="Atracotoxin"/>
</dbReference>
<dbReference type="Pfam" id="PF17556">
    <property type="entry name" value="MIT_LIKE_ACTX"/>
    <property type="match status" value="1"/>
</dbReference>
<accession>Q5D232</accession>
<name>T7496_ILLWI</name>
<evidence type="ECO:0000250" key="1"/>
<evidence type="ECO:0000255" key="2"/>
<evidence type="ECO:0000303" key="3">
    <source>
    </source>
</evidence>
<evidence type="ECO:0000305" key="4"/>
<evidence type="ECO:0000305" key="5">
    <source>
    </source>
</evidence>
<sequence length="89" mass="9890">MLKFVVLIFVVIMASTFAEQCGDKVCGEGTCCSEFPVVHCRELGIVDDLCMSPGETTDSGRYLFFCPCETGLRCDKNDWTCKQDSSRSE</sequence>
<proteinExistence type="evidence at transcript level"/>
<reference key="1">
    <citation type="journal article" date="2005" name="Peptides">
        <title>Discovery of an MIT-like atracotoxin family: spider venom peptides that share sequence homology but not pharmacological properties with AVIT family proteins.</title>
        <authorList>
            <person name="Wen S."/>
            <person name="Wilson D.T."/>
            <person name="Kuruppu S."/>
            <person name="Korsinczky M.L."/>
            <person name="Hedrick J."/>
            <person name="Pang L."/>
            <person name="Szeto T."/>
            <person name="Hodgson W.C."/>
            <person name="Alewood P.F."/>
            <person name="Nicholson G.M."/>
        </authorList>
    </citation>
    <scope>NUCLEOTIDE SEQUENCE [MRNA]</scope>
    <source>
        <tissue>Venom gland</tissue>
    </source>
</reference>
<feature type="signal peptide" evidence="2">
    <location>
        <begin position="1"/>
        <end position="18"/>
    </location>
</feature>
<feature type="chain" id="PRO_0000265769" description="U1-hexatoxin-Iw1e">
    <location>
        <begin position="19"/>
        <end position="86"/>
    </location>
</feature>
<feature type="propeptide" id="PRO_0000265770" evidence="1">
    <location>
        <begin position="87"/>
        <end position="89"/>
    </location>
</feature>
<feature type="disulfide bond" evidence="5">
    <location>
        <begin position="21"/>
        <end position="32"/>
    </location>
</feature>
<feature type="disulfide bond" evidence="5">
    <location>
        <begin position="26"/>
        <end position="40"/>
    </location>
</feature>
<feature type="disulfide bond" evidence="5">
    <location>
        <begin position="31"/>
        <end position="66"/>
    </location>
</feature>
<feature type="disulfide bond" evidence="5">
    <location>
        <begin position="50"/>
        <end position="74"/>
    </location>
</feature>
<feature type="disulfide bond" evidence="5">
    <location>
        <begin position="68"/>
        <end position="81"/>
    </location>
</feature>
<comment type="subcellular location">
    <subcellularLocation>
        <location>Secreted</location>
    </subcellularLocation>
</comment>
<comment type="tissue specificity">
    <text>Expressed by the venom gland.</text>
</comment>
<comment type="similarity">
    <text evidence="4">Belongs to the MIT-like AcTx family.</text>
</comment>
<keyword id="KW-1015">Disulfide bond</keyword>
<keyword id="KW-0964">Secreted</keyword>
<keyword id="KW-0732">Signal</keyword>
<protein>
    <recommendedName>
        <fullName>U1-hexatoxin-Iw1e</fullName>
        <shortName>U1-HXTX-Iw1e</shortName>
    </recommendedName>
    <alternativeName>
        <fullName evidence="3">Atracotoxin-Hs20f7496</fullName>
        <shortName evidence="3">AcTx-Hs20f7496</shortName>
    </alternativeName>
</protein>
<organism>
    <name type="scientific">Illawarra wisharti</name>
    <name type="common">Illawarra funnel-web spider</name>
    <dbReference type="NCBI Taxonomy" id="278061"/>
    <lineage>
        <taxon>Eukaryota</taxon>
        <taxon>Metazoa</taxon>
        <taxon>Ecdysozoa</taxon>
        <taxon>Arthropoda</taxon>
        <taxon>Chelicerata</taxon>
        <taxon>Arachnida</taxon>
        <taxon>Araneae</taxon>
        <taxon>Mygalomorphae</taxon>
        <taxon>Hexathelidae</taxon>
        <taxon>Hadronyche</taxon>
    </lineage>
</organism>